<comment type="function">
    <text evidence="1">Binds directly to 23S ribosomal RNA and is necessary for the in vitro assembly process of the 50S ribosomal subunit. It is not involved in the protein synthesizing functions of that subunit.</text>
</comment>
<comment type="similarity">
    <text evidence="1">Belongs to the bacterial ribosomal protein bL20 family.</text>
</comment>
<dbReference type="EMBL" id="AE007317">
    <property type="protein sequence ID" value="AAK99667.1"/>
    <property type="molecule type" value="Genomic_DNA"/>
</dbReference>
<dbReference type="PIR" id="G97979">
    <property type="entry name" value="G97979"/>
</dbReference>
<dbReference type="RefSeq" id="NP_358457.1">
    <property type="nucleotide sequence ID" value="NC_003098.1"/>
</dbReference>
<dbReference type="RefSeq" id="WP_000124836.1">
    <property type="nucleotide sequence ID" value="NC_003098.1"/>
</dbReference>
<dbReference type="SMR" id="P66113"/>
<dbReference type="STRING" id="171101.spr0863"/>
<dbReference type="GeneID" id="45653697"/>
<dbReference type="KEGG" id="spr:spr0863"/>
<dbReference type="PATRIC" id="fig|171101.6.peg.951"/>
<dbReference type="eggNOG" id="COG0292">
    <property type="taxonomic scope" value="Bacteria"/>
</dbReference>
<dbReference type="HOGENOM" id="CLU_123265_0_1_9"/>
<dbReference type="PRO" id="PR:P66113"/>
<dbReference type="Proteomes" id="UP000000586">
    <property type="component" value="Chromosome"/>
</dbReference>
<dbReference type="GO" id="GO:0022625">
    <property type="term" value="C:cytosolic large ribosomal subunit"/>
    <property type="evidence" value="ECO:0000318"/>
    <property type="project" value="GO_Central"/>
</dbReference>
<dbReference type="GO" id="GO:0019843">
    <property type="term" value="F:rRNA binding"/>
    <property type="evidence" value="ECO:0007669"/>
    <property type="project" value="UniProtKB-UniRule"/>
</dbReference>
<dbReference type="GO" id="GO:0003735">
    <property type="term" value="F:structural constituent of ribosome"/>
    <property type="evidence" value="ECO:0000318"/>
    <property type="project" value="GO_Central"/>
</dbReference>
<dbReference type="GO" id="GO:0000027">
    <property type="term" value="P:ribosomal large subunit assembly"/>
    <property type="evidence" value="ECO:0007669"/>
    <property type="project" value="UniProtKB-UniRule"/>
</dbReference>
<dbReference type="GO" id="GO:0006412">
    <property type="term" value="P:translation"/>
    <property type="evidence" value="ECO:0007669"/>
    <property type="project" value="InterPro"/>
</dbReference>
<dbReference type="CDD" id="cd07026">
    <property type="entry name" value="Ribosomal_L20"/>
    <property type="match status" value="1"/>
</dbReference>
<dbReference type="FunFam" id="1.10.1900.20:FF:000001">
    <property type="entry name" value="50S ribosomal protein L20"/>
    <property type="match status" value="1"/>
</dbReference>
<dbReference type="Gene3D" id="6.10.160.10">
    <property type="match status" value="1"/>
</dbReference>
<dbReference type="Gene3D" id="1.10.1900.20">
    <property type="entry name" value="Ribosomal protein L20"/>
    <property type="match status" value="1"/>
</dbReference>
<dbReference type="HAMAP" id="MF_00382">
    <property type="entry name" value="Ribosomal_bL20"/>
    <property type="match status" value="1"/>
</dbReference>
<dbReference type="InterPro" id="IPR005813">
    <property type="entry name" value="Ribosomal_bL20"/>
</dbReference>
<dbReference type="InterPro" id="IPR049946">
    <property type="entry name" value="RIBOSOMAL_L20_CS"/>
</dbReference>
<dbReference type="InterPro" id="IPR035566">
    <property type="entry name" value="Ribosomal_protein_bL20_C"/>
</dbReference>
<dbReference type="NCBIfam" id="TIGR01032">
    <property type="entry name" value="rplT_bact"/>
    <property type="match status" value="1"/>
</dbReference>
<dbReference type="PANTHER" id="PTHR10986">
    <property type="entry name" value="39S RIBOSOMAL PROTEIN L20"/>
    <property type="match status" value="1"/>
</dbReference>
<dbReference type="Pfam" id="PF00453">
    <property type="entry name" value="Ribosomal_L20"/>
    <property type="match status" value="1"/>
</dbReference>
<dbReference type="PRINTS" id="PR00062">
    <property type="entry name" value="RIBOSOMALL20"/>
</dbReference>
<dbReference type="SUPFAM" id="SSF74731">
    <property type="entry name" value="Ribosomal protein L20"/>
    <property type="match status" value="1"/>
</dbReference>
<dbReference type="PROSITE" id="PS00937">
    <property type="entry name" value="RIBOSOMAL_L20"/>
    <property type="match status" value="1"/>
</dbReference>
<accession>P66113</accession>
<accession>Q97R68</accession>
<name>RL20_STRR6</name>
<organism>
    <name type="scientific">Streptococcus pneumoniae (strain ATCC BAA-255 / R6)</name>
    <dbReference type="NCBI Taxonomy" id="171101"/>
    <lineage>
        <taxon>Bacteria</taxon>
        <taxon>Bacillati</taxon>
        <taxon>Bacillota</taxon>
        <taxon>Bacilli</taxon>
        <taxon>Lactobacillales</taxon>
        <taxon>Streptococcaceae</taxon>
        <taxon>Streptococcus</taxon>
    </lineage>
</organism>
<gene>
    <name evidence="1" type="primary">rplT</name>
    <name type="ordered locus">spr0863</name>
</gene>
<reference key="1">
    <citation type="journal article" date="2001" name="J. Bacteriol.">
        <title>Genome of the bacterium Streptococcus pneumoniae strain R6.</title>
        <authorList>
            <person name="Hoskins J."/>
            <person name="Alborn W.E. Jr."/>
            <person name="Arnold J."/>
            <person name="Blaszczak L.C."/>
            <person name="Burgett S."/>
            <person name="DeHoff B.S."/>
            <person name="Estrem S.T."/>
            <person name="Fritz L."/>
            <person name="Fu D.-J."/>
            <person name="Fuller W."/>
            <person name="Geringer C."/>
            <person name="Gilmour R."/>
            <person name="Glass J.S."/>
            <person name="Khoja H."/>
            <person name="Kraft A.R."/>
            <person name="Lagace R.E."/>
            <person name="LeBlanc D.J."/>
            <person name="Lee L.N."/>
            <person name="Lefkowitz E.J."/>
            <person name="Lu J."/>
            <person name="Matsushima P."/>
            <person name="McAhren S.M."/>
            <person name="McHenney M."/>
            <person name="McLeaster K."/>
            <person name="Mundy C.W."/>
            <person name="Nicas T.I."/>
            <person name="Norris F.H."/>
            <person name="O'Gara M."/>
            <person name="Peery R.B."/>
            <person name="Robertson G.T."/>
            <person name="Rockey P."/>
            <person name="Sun P.-M."/>
            <person name="Winkler M.E."/>
            <person name="Yang Y."/>
            <person name="Young-Bellido M."/>
            <person name="Zhao G."/>
            <person name="Zook C.A."/>
            <person name="Baltz R.H."/>
            <person name="Jaskunas S.R."/>
            <person name="Rosteck P.R. Jr."/>
            <person name="Skatrud P.L."/>
            <person name="Glass J.I."/>
        </authorList>
    </citation>
    <scope>NUCLEOTIDE SEQUENCE [LARGE SCALE GENOMIC DNA]</scope>
    <source>
        <strain>ATCC BAA-255 / R6</strain>
    </source>
</reference>
<proteinExistence type="inferred from homology"/>
<keyword id="KW-1185">Reference proteome</keyword>
<keyword id="KW-0687">Ribonucleoprotein</keyword>
<keyword id="KW-0689">Ribosomal protein</keyword>
<keyword id="KW-0694">RNA-binding</keyword>
<keyword id="KW-0699">rRNA-binding</keyword>
<feature type="chain" id="PRO_0000177239" description="Large ribosomal subunit protein bL20">
    <location>
        <begin position="1"/>
        <end position="119"/>
    </location>
</feature>
<sequence>MARVKGGVVSRKRRKRILKLAKGYYGAKHILFRTAKEQVMNSYYYAYRDRRQKKRDFRKLWITRINAAARMNGLSYSQLMHGLKLAEIEVNRKMLADLAVNDAVAFTALADAAKAKLGK</sequence>
<protein>
    <recommendedName>
        <fullName evidence="1">Large ribosomal subunit protein bL20</fullName>
    </recommendedName>
    <alternativeName>
        <fullName evidence="2">50S ribosomal protein L20</fullName>
    </alternativeName>
</protein>
<evidence type="ECO:0000255" key="1">
    <source>
        <dbReference type="HAMAP-Rule" id="MF_00382"/>
    </source>
</evidence>
<evidence type="ECO:0000305" key="2"/>